<protein>
    <recommendedName>
        <fullName evidence="1">Pyridoxine 5'-phosphate synthase</fullName>
        <shortName evidence="1">PNP synthase</shortName>
        <ecNumber evidence="1">2.6.99.2</ecNumber>
    </recommendedName>
</protein>
<comment type="function">
    <text evidence="1">Catalyzes the complicated ring closure reaction between the two acyclic compounds 1-deoxy-D-xylulose-5-phosphate (DXP) and 3-amino-2-oxopropyl phosphate (1-amino-acetone-3-phosphate or AAP) to form pyridoxine 5'-phosphate (PNP) and inorganic phosphate.</text>
</comment>
<comment type="catalytic activity">
    <reaction evidence="1">
        <text>3-amino-2-oxopropyl phosphate + 1-deoxy-D-xylulose 5-phosphate = pyridoxine 5'-phosphate + phosphate + 2 H2O + H(+)</text>
        <dbReference type="Rhea" id="RHEA:15265"/>
        <dbReference type="ChEBI" id="CHEBI:15377"/>
        <dbReference type="ChEBI" id="CHEBI:15378"/>
        <dbReference type="ChEBI" id="CHEBI:43474"/>
        <dbReference type="ChEBI" id="CHEBI:57279"/>
        <dbReference type="ChEBI" id="CHEBI:57792"/>
        <dbReference type="ChEBI" id="CHEBI:58589"/>
        <dbReference type="EC" id="2.6.99.2"/>
    </reaction>
</comment>
<comment type="pathway">
    <text evidence="1">Cofactor biosynthesis; pyridoxine 5'-phosphate biosynthesis; pyridoxine 5'-phosphate from D-erythrose 4-phosphate: step 5/5.</text>
</comment>
<comment type="subunit">
    <text evidence="1">Homooctamer; tetramer of dimers.</text>
</comment>
<comment type="subcellular location">
    <subcellularLocation>
        <location evidence="1">Cytoplasm</location>
    </subcellularLocation>
</comment>
<comment type="similarity">
    <text evidence="1">Belongs to the PNP synthase family.</text>
</comment>
<dbReference type="EC" id="2.6.99.2" evidence="1"/>
<dbReference type="EMBL" id="AE017223">
    <property type="protein sequence ID" value="AAX74712.1"/>
    <property type="molecule type" value="Genomic_DNA"/>
</dbReference>
<dbReference type="RefSeq" id="WP_002964495.1">
    <property type="nucleotide sequence ID" value="NC_006932.1"/>
</dbReference>
<dbReference type="SMR" id="Q57CC2"/>
<dbReference type="EnsemblBacteria" id="AAX74712">
    <property type="protein sequence ID" value="AAX74712"/>
    <property type="gene ID" value="BruAb1_1381"/>
</dbReference>
<dbReference type="KEGG" id="bmb:BruAb1_1381"/>
<dbReference type="HOGENOM" id="CLU_074563_1_0_5"/>
<dbReference type="UniPathway" id="UPA00244">
    <property type="reaction ID" value="UER00313"/>
</dbReference>
<dbReference type="Proteomes" id="UP000000540">
    <property type="component" value="Chromosome I"/>
</dbReference>
<dbReference type="GO" id="GO:0005829">
    <property type="term" value="C:cytosol"/>
    <property type="evidence" value="ECO:0007669"/>
    <property type="project" value="TreeGrafter"/>
</dbReference>
<dbReference type="GO" id="GO:0033856">
    <property type="term" value="F:pyridoxine 5'-phosphate synthase activity"/>
    <property type="evidence" value="ECO:0007669"/>
    <property type="project" value="UniProtKB-EC"/>
</dbReference>
<dbReference type="GO" id="GO:0008615">
    <property type="term" value="P:pyridoxine biosynthetic process"/>
    <property type="evidence" value="ECO:0007669"/>
    <property type="project" value="UniProtKB-UniRule"/>
</dbReference>
<dbReference type="CDD" id="cd00003">
    <property type="entry name" value="PNPsynthase"/>
    <property type="match status" value="1"/>
</dbReference>
<dbReference type="Gene3D" id="3.20.20.70">
    <property type="entry name" value="Aldolase class I"/>
    <property type="match status" value="1"/>
</dbReference>
<dbReference type="HAMAP" id="MF_00279">
    <property type="entry name" value="PdxJ"/>
    <property type="match status" value="1"/>
</dbReference>
<dbReference type="InterPro" id="IPR013785">
    <property type="entry name" value="Aldolase_TIM"/>
</dbReference>
<dbReference type="InterPro" id="IPR004569">
    <property type="entry name" value="PyrdxlP_synth_PdxJ"/>
</dbReference>
<dbReference type="InterPro" id="IPR036130">
    <property type="entry name" value="Pyridoxine-5'_phos_synth"/>
</dbReference>
<dbReference type="NCBIfam" id="TIGR00559">
    <property type="entry name" value="pdxJ"/>
    <property type="match status" value="1"/>
</dbReference>
<dbReference type="NCBIfam" id="NF003626">
    <property type="entry name" value="PRK05265.1-4"/>
    <property type="match status" value="1"/>
</dbReference>
<dbReference type="PANTHER" id="PTHR30456">
    <property type="entry name" value="PYRIDOXINE 5'-PHOSPHATE SYNTHASE"/>
    <property type="match status" value="1"/>
</dbReference>
<dbReference type="PANTHER" id="PTHR30456:SF0">
    <property type="entry name" value="PYRIDOXINE 5'-PHOSPHATE SYNTHASE"/>
    <property type="match status" value="1"/>
</dbReference>
<dbReference type="Pfam" id="PF03740">
    <property type="entry name" value="PdxJ"/>
    <property type="match status" value="1"/>
</dbReference>
<dbReference type="SUPFAM" id="SSF63892">
    <property type="entry name" value="Pyridoxine 5'-phosphate synthase"/>
    <property type="match status" value="1"/>
</dbReference>
<organism>
    <name type="scientific">Brucella abortus biovar 1 (strain 9-941)</name>
    <dbReference type="NCBI Taxonomy" id="262698"/>
    <lineage>
        <taxon>Bacteria</taxon>
        <taxon>Pseudomonadati</taxon>
        <taxon>Pseudomonadota</taxon>
        <taxon>Alphaproteobacteria</taxon>
        <taxon>Hyphomicrobiales</taxon>
        <taxon>Brucellaceae</taxon>
        <taxon>Brucella/Ochrobactrum group</taxon>
        <taxon>Brucella</taxon>
    </lineage>
</organism>
<proteinExistence type="inferred from homology"/>
<name>PDXJ_BRUAB</name>
<accession>Q57CC2</accession>
<sequence length="246" mass="26466">MPAKLSVNLNAIAMLRNRRDLPWPSVTGLGRAALAAGAAGLTVHPRPDQRHIRFSDLGDIRALIDDEYPQAEFNIEGFPSEAFLDLVEKHEPEQVTLVPDDPMQATSDHGWDFMSKADFLAPIVARLKGRGMRVSLFADPDSLGYERAKAIGADRVELYTGPYGATHDDPAAAARELDRLEKAARAATALGLAVNAGHDLTVDNLPALVKRIPQLAEVSIGHGLTADALMYGIPVTVSRYITALAG</sequence>
<keyword id="KW-0963">Cytoplasm</keyword>
<keyword id="KW-0664">Pyridoxine biosynthesis</keyword>
<keyword id="KW-0808">Transferase</keyword>
<evidence type="ECO:0000255" key="1">
    <source>
        <dbReference type="HAMAP-Rule" id="MF_00279"/>
    </source>
</evidence>
<reference key="1">
    <citation type="journal article" date="2005" name="J. Bacteriol.">
        <title>Completion of the genome sequence of Brucella abortus and comparison to the highly similar genomes of Brucella melitensis and Brucella suis.</title>
        <authorList>
            <person name="Halling S.M."/>
            <person name="Peterson-Burch B.D."/>
            <person name="Bricker B.J."/>
            <person name="Zuerner R.L."/>
            <person name="Qing Z."/>
            <person name="Li L.-L."/>
            <person name="Kapur V."/>
            <person name="Alt D.P."/>
            <person name="Olsen S.C."/>
        </authorList>
    </citation>
    <scope>NUCLEOTIDE SEQUENCE [LARGE SCALE GENOMIC DNA]</scope>
    <source>
        <strain>9-941</strain>
    </source>
</reference>
<feature type="chain" id="PRO_0000231790" description="Pyridoxine 5'-phosphate synthase">
    <location>
        <begin position="1"/>
        <end position="246"/>
    </location>
</feature>
<feature type="active site" description="Proton acceptor" evidence="1">
    <location>
        <position position="44"/>
    </location>
</feature>
<feature type="active site" description="Proton acceptor" evidence="1">
    <location>
        <position position="76"/>
    </location>
</feature>
<feature type="active site" description="Proton donor" evidence="1">
    <location>
        <position position="198"/>
    </location>
</feature>
<feature type="binding site" evidence="1">
    <location>
        <position position="8"/>
    </location>
    <ligand>
        <name>3-amino-2-oxopropyl phosphate</name>
        <dbReference type="ChEBI" id="CHEBI:57279"/>
    </ligand>
</feature>
<feature type="binding site" evidence="1">
    <location>
        <position position="19"/>
    </location>
    <ligand>
        <name>3-amino-2-oxopropyl phosphate</name>
        <dbReference type="ChEBI" id="CHEBI:57279"/>
    </ligand>
</feature>
<feature type="binding site" evidence="1">
    <location>
        <position position="46"/>
    </location>
    <ligand>
        <name>1-deoxy-D-xylulose 5-phosphate</name>
        <dbReference type="ChEBI" id="CHEBI:57792"/>
    </ligand>
</feature>
<feature type="binding site" evidence="1">
    <location>
        <position position="51"/>
    </location>
    <ligand>
        <name>1-deoxy-D-xylulose 5-phosphate</name>
        <dbReference type="ChEBI" id="CHEBI:57792"/>
    </ligand>
</feature>
<feature type="binding site" evidence="1">
    <location>
        <position position="106"/>
    </location>
    <ligand>
        <name>1-deoxy-D-xylulose 5-phosphate</name>
        <dbReference type="ChEBI" id="CHEBI:57792"/>
    </ligand>
</feature>
<feature type="binding site" evidence="1">
    <location>
        <position position="199"/>
    </location>
    <ligand>
        <name>3-amino-2-oxopropyl phosphate</name>
        <dbReference type="ChEBI" id="CHEBI:57279"/>
    </ligand>
</feature>
<feature type="binding site" evidence="1">
    <location>
        <begin position="221"/>
        <end position="222"/>
    </location>
    <ligand>
        <name>3-amino-2-oxopropyl phosphate</name>
        <dbReference type="ChEBI" id="CHEBI:57279"/>
    </ligand>
</feature>
<feature type="site" description="Transition state stabilizer" evidence="1">
    <location>
        <position position="157"/>
    </location>
</feature>
<gene>
    <name evidence="1" type="primary">pdxJ</name>
    <name type="ordered locus">BruAb1_1381</name>
</gene>